<organism>
    <name type="scientific">Equus caballus</name>
    <name type="common">Horse</name>
    <dbReference type="NCBI Taxonomy" id="9796"/>
    <lineage>
        <taxon>Eukaryota</taxon>
        <taxon>Metazoa</taxon>
        <taxon>Chordata</taxon>
        <taxon>Craniata</taxon>
        <taxon>Vertebrata</taxon>
        <taxon>Euteleostomi</taxon>
        <taxon>Mammalia</taxon>
        <taxon>Eutheria</taxon>
        <taxon>Laurasiatheria</taxon>
        <taxon>Perissodactyla</taxon>
        <taxon>Equidae</taxon>
        <taxon>Equus</taxon>
    </lineage>
</organism>
<name>PROC_HORSE</name>
<gene>
    <name type="primary">PROC</name>
</gene>
<keyword id="KW-0094">Blood coagulation</keyword>
<keyword id="KW-1015">Disulfide bond</keyword>
<keyword id="KW-0256">Endoplasmic reticulum</keyword>
<keyword id="KW-0325">Glycoprotein</keyword>
<keyword id="KW-0333">Golgi apparatus</keyword>
<keyword id="KW-0356">Hemostasis</keyword>
<keyword id="KW-0378">Hydrolase</keyword>
<keyword id="KW-0645">Protease</keyword>
<keyword id="KW-1185">Reference proteome</keyword>
<keyword id="KW-0964">Secreted</keyword>
<keyword id="KW-0720">Serine protease</keyword>
<protein>
    <recommendedName>
        <fullName>Vitamin K-dependent protein C</fullName>
        <ecNumber>3.4.21.69</ecNumber>
    </recommendedName>
    <alternativeName>
        <fullName>Anticoagulant protein C</fullName>
    </alternativeName>
    <alternativeName>
        <fullName>Autoprothrombin IIA</fullName>
    </alternativeName>
    <alternativeName>
        <fullName>Blood coagulation factor XIV</fullName>
    </alternativeName>
</protein>
<proteinExistence type="evidence at transcript level"/>
<comment type="function">
    <text evidence="1">Protein C is a vitamin K-dependent serine protease that regulates blood coagulation by inactivating factors Va and VIIIa in the presence of calcium ions and phospholipids. Exerts a protective effect on the endothelial cell barrier function.</text>
</comment>
<comment type="catalytic activity">
    <reaction>
        <text>Degradation of blood coagulation factors Va and VIIIa.</text>
        <dbReference type="EC" id="3.4.21.69"/>
    </reaction>
</comment>
<comment type="subcellular location">
    <subcellularLocation>
        <location evidence="1">Secreted</location>
    </subcellularLocation>
    <subcellularLocation>
        <location evidence="1">Golgi apparatus</location>
    </subcellularLocation>
    <subcellularLocation>
        <location evidence="1">Endoplasmic reticulum</location>
    </subcellularLocation>
</comment>
<comment type="tissue specificity">
    <text>Plasma; synthesized in the liver.</text>
</comment>
<comment type="similarity">
    <text evidence="3">Belongs to the peptidase S1 family.</text>
</comment>
<accession>Q28380</accession>
<sequence length="157" mass="17200">ENGEVDLDIQEVIMHPNYSKSSSDNDIALLRLARPATFSQTIVPICLPDSGLSERELTQAGQETVVTGWGYRSETKRNRTFVLNFIKVPVVPHSECVRTMHNLVSENMLCAGILGDTRDACEGDSGGPMVASFRGTWFLVGLVSWGEGCGRLHNYGV</sequence>
<evidence type="ECO:0000250" key="1">
    <source>
        <dbReference type="UniProtKB" id="P04070"/>
    </source>
</evidence>
<evidence type="ECO:0000255" key="2"/>
<evidence type="ECO:0000255" key="3">
    <source>
        <dbReference type="PROSITE-ProRule" id="PRU00274"/>
    </source>
</evidence>
<feature type="chain" id="PRO_0000088710" description="Vitamin K-dependent protein C">
    <location>
        <begin position="1" status="less than"/>
        <end position="157" status="greater than"/>
    </location>
</feature>
<feature type="domain" description="Peptidase S1" evidence="3">
    <location>
        <begin position="1" status="less than"/>
        <end position="157" status="greater than"/>
    </location>
</feature>
<feature type="active site" description="Charge relay system">
    <location>
        <position position="26"/>
    </location>
</feature>
<feature type="active site" description="Charge relay system">
    <location>
        <position position="125"/>
    </location>
</feature>
<feature type="glycosylation site" description="N-linked (GlcNAc...) asparagine" evidence="2">
    <location>
        <position position="17"/>
    </location>
</feature>
<feature type="glycosylation site" description="N-linked (GlcNAc...) asparagine" evidence="2">
    <location>
        <position position="78"/>
    </location>
</feature>
<feature type="disulfide bond" evidence="3">
    <location>
        <begin position="96"/>
        <end position="110"/>
    </location>
</feature>
<feature type="disulfide bond" evidence="3">
    <location>
        <begin position="121"/>
        <end position="149"/>
    </location>
</feature>
<feature type="non-terminal residue">
    <location>
        <position position="1"/>
    </location>
</feature>
<feature type="non-terminal residue">
    <location>
        <position position="157"/>
    </location>
</feature>
<dbReference type="EC" id="3.4.21.69"/>
<dbReference type="EMBL" id="D43753">
    <property type="protein sequence ID" value="BAA07810.1"/>
    <property type="molecule type" value="Genomic_DNA"/>
</dbReference>
<dbReference type="SMR" id="Q28380"/>
<dbReference type="STRING" id="9796.ENSECAP00000026753"/>
<dbReference type="MEROPS" id="S01.218"/>
<dbReference type="GlyCosmos" id="Q28380">
    <property type="glycosylation" value="2 sites, No reported glycans"/>
</dbReference>
<dbReference type="PaxDb" id="9796-ENSECAP00000026753"/>
<dbReference type="HOGENOM" id="CLU_006842_19_5_1"/>
<dbReference type="InParanoid" id="Q28380"/>
<dbReference type="Proteomes" id="UP000002281">
    <property type="component" value="Unplaced"/>
</dbReference>
<dbReference type="GO" id="GO:0005783">
    <property type="term" value="C:endoplasmic reticulum"/>
    <property type="evidence" value="ECO:0000250"/>
    <property type="project" value="UniProtKB"/>
</dbReference>
<dbReference type="GO" id="GO:0005576">
    <property type="term" value="C:extracellular region"/>
    <property type="evidence" value="ECO:0007669"/>
    <property type="project" value="UniProtKB-SubCell"/>
</dbReference>
<dbReference type="GO" id="GO:0005794">
    <property type="term" value="C:Golgi apparatus"/>
    <property type="evidence" value="ECO:0000250"/>
    <property type="project" value="UniProtKB"/>
</dbReference>
<dbReference type="GO" id="GO:0004252">
    <property type="term" value="F:serine-type endopeptidase activity"/>
    <property type="evidence" value="ECO:0000250"/>
    <property type="project" value="UniProtKB"/>
</dbReference>
<dbReference type="GO" id="GO:0007596">
    <property type="term" value="P:blood coagulation"/>
    <property type="evidence" value="ECO:0007669"/>
    <property type="project" value="UniProtKB-KW"/>
</dbReference>
<dbReference type="GO" id="GO:0050819">
    <property type="term" value="P:negative regulation of coagulation"/>
    <property type="evidence" value="ECO:0000250"/>
    <property type="project" value="UniProtKB"/>
</dbReference>
<dbReference type="GO" id="GO:0050728">
    <property type="term" value="P:negative regulation of inflammatory response"/>
    <property type="evidence" value="ECO:0000250"/>
    <property type="project" value="UniProtKB"/>
</dbReference>
<dbReference type="GO" id="GO:1903142">
    <property type="term" value="P:positive regulation of establishment of endothelial barrier"/>
    <property type="evidence" value="ECO:0000250"/>
    <property type="project" value="UniProtKB"/>
</dbReference>
<dbReference type="GO" id="GO:0006508">
    <property type="term" value="P:proteolysis"/>
    <property type="evidence" value="ECO:0007669"/>
    <property type="project" value="UniProtKB-KW"/>
</dbReference>
<dbReference type="CDD" id="cd00190">
    <property type="entry name" value="Tryp_SPc"/>
    <property type="match status" value="1"/>
</dbReference>
<dbReference type="FunFam" id="2.40.10.10:FF:000011">
    <property type="entry name" value="Coagulation factor X"/>
    <property type="match status" value="1"/>
</dbReference>
<dbReference type="Gene3D" id="2.40.10.10">
    <property type="entry name" value="Trypsin-like serine proteases"/>
    <property type="match status" value="2"/>
</dbReference>
<dbReference type="InterPro" id="IPR050442">
    <property type="entry name" value="Peptidase_S1_coag_factors"/>
</dbReference>
<dbReference type="InterPro" id="IPR009003">
    <property type="entry name" value="Peptidase_S1_PA"/>
</dbReference>
<dbReference type="InterPro" id="IPR043504">
    <property type="entry name" value="Peptidase_S1_PA_chymotrypsin"/>
</dbReference>
<dbReference type="InterPro" id="IPR001314">
    <property type="entry name" value="Peptidase_S1A"/>
</dbReference>
<dbReference type="InterPro" id="IPR001254">
    <property type="entry name" value="Trypsin_dom"/>
</dbReference>
<dbReference type="InterPro" id="IPR033116">
    <property type="entry name" value="TRYPSIN_SER"/>
</dbReference>
<dbReference type="PANTHER" id="PTHR24278">
    <property type="entry name" value="COAGULATION FACTOR"/>
    <property type="match status" value="1"/>
</dbReference>
<dbReference type="PANTHER" id="PTHR24278:SF0">
    <property type="entry name" value="VITAMIN K-DEPENDENT PROTEIN C"/>
    <property type="match status" value="1"/>
</dbReference>
<dbReference type="Pfam" id="PF00089">
    <property type="entry name" value="Trypsin"/>
    <property type="match status" value="1"/>
</dbReference>
<dbReference type="PRINTS" id="PR00722">
    <property type="entry name" value="CHYMOTRYPSIN"/>
</dbReference>
<dbReference type="SMART" id="SM00020">
    <property type="entry name" value="Tryp_SPc"/>
    <property type="match status" value="1"/>
</dbReference>
<dbReference type="SUPFAM" id="SSF50494">
    <property type="entry name" value="Trypsin-like serine proteases"/>
    <property type="match status" value="1"/>
</dbReference>
<dbReference type="PROSITE" id="PS50240">
    <property type="entry name" value="TRYPSIN_DOM"/>
    <property type="match status" value="1"/>
</dbReference>
<dbReference type="PROSITE" id="PS00135">
    <property type="entry name" value="TRYPSIN_SER"/>
    <property type="match status" value="1"/>
</dbReference>
<reference key="1">
    <citation type="journal article" date="1994" name="Br. J. Haematol.">
        <title>A comparative study of partial primary structures of the catalytic region of mammalian protein C.</title>
        <authorList>
            <person name="Murakawa M."/>
            <person name="Okamura T."/>
            <person name="Kamura T."/>
            <person name="Kuroiwa M."/>
            <person name="Harada M."/>
            <person name="Niho Y."/>
        </authorList>
    </citation>
    <scope>NUCLEOTIDE SEQUENCE [GENOMIC DNA]</scope>
</reference>